<evidence type="ECO:0000250" key="1">
    <source>
        <dbReference type="UniProtKB" id="Q5EBL8"/>
    </source>
</evidence>
<evidence type="ECO:0000250" key="2">
    <source>
        <dbReference type="UniProtKB" id="Q9CZG9"/>
    </source>
</evidence>
<evidence type="ECO:0000255" key="3">
    <source>
        <dbReference type="PROSITE-ProRule" id="PRU00143"/>
    </source>
</evidence>
<proteinExistence type="evidence at transcript level"/>
<organism>
    <name type="scientific">Bos taurus</name>
    <name type="common">Bovine</name>
    <dbReference type="NCBI Taxonomy" id="9913"/>
    <lineage>
        <taxon>Eukaryota</taxon>
        <taxon>Metazoa</taxon>
        <taxon>Chordata</taxon>
        <taxon>Craniata</taxon>
        <taxon>Vertebrata</taxon>
        <taxon>Euteleostomi</taxon>
        <taxon>Mammalia</taxon>
        <taxon>Eutheria</taxon>
        <taxon>Laurasiatheria</taxon>
        <taxon>Artiodactyla</taxon>
        <taxon>Ruminantia</taxon>
        <taxon>Pecora</taxon>
        <taxon>Bovidae</taxon>
        <taxon>Bovinae</taxon>
        <taxon>Bos</taxon>
    </lineage>
</organism>
<name>PDZ11_BOVIN</name>
<accession>Q32LE7</accession>
<reference key="1">
    <citation type="submission" date="2005-11" db="EMBL/GenBank/DDBJ databases">
        <authorList>
            <consortium name="NIH - Mammalian Gene Collection (MGC) project"/>
        </authorList>
    </citation>
    <scope>NUCLEOTIDE SEQUENCE [LARGE SCALE MRNA]</scope>
    <source>
        <strain>Crossbred X Angus</strain>
        <tissue>Liver</tissue>
    </source>
</reference>
<keyword id="KW-0965">Cell junction</keyword>
<keyword id="KW-1003">Cell membrane</keyword>
<keyword id="KW-0963">Cytoplasm</keyword>
<keyword id="KW-0472">Membrane</keyword>
<keyword id="KW-1185">Reference proteome</keyword>
<feature type="chain" id="PRO_0000246777" description="PDZ domain-containing protein 11">
    <location>
        <begin position="1"/>
        <end position="140"/>
    </location>
</feature>
<feature type="domain" description="PDZ" evidence="3">
    <location>
        <begin position="47"/>
        <end position="129"/>
    </location>
</feature>
<protein>
    <recommendedName>
        <fullName>PDZ domain-containing protein 11</fullName>
    </recommendedName>
</protein>
<comment type="function">
    <text evidence="1">Mediates docking of ADAM10 to zonula adherens by interacting with PLEKHA7 which is required for PLEKHA7 to interact with the ADAM10-binding protein TSPAN33.</text>
</comment>
<comment type="subunit">
    <text evidence="1">Interacts with ATP2B1, ATP2B2, ATP2B3, ATP2B4 and ATP7A (By similarity). Interacts with PLEKHA7 (via WW domains) at zonula adherens; this interaction is essential for the interaction between PLEKHA7 and the ADAM10-binding protein TSPAN33 (By similarity). Interacts with SLC5A6 (By similarity).</text>
</comment>
<comment type="subcellular location">
    <subcellularLocation>
        <location evidence="1">Cytoplasm</location>
    </subcellularLocation>
    <subcellularLocation>
        <location evidence="2">Cell junction</location>
        <location evidence="2">Adherens junction</location>
    </subcellularLocation>
    <subcellularLocation>
        <location evidence="2">Cell membrane</location>
    </subcellularLocation>
</comment>
<gene>
    <name type="primary">PDZD11</name>
</gene>
<sequence length="140" mass="16155">MDSRIPYDDYPVVFLPAYENPPAWIPPHERVYHPDYNNELTQFLPRIVTLKKPPGAQLGFNIRGGKASQLGIFISKVIPDSDAHRAGLQEGDQVLAVNDVDFQDIEHSKAVEILKTAREISMRVRFFPYNYHRQKERTVH</sequence>
<dbReference type="EMBL" id="BC109619">
    <property type="protein sequence ID" value="AAI09620.1"/>
    <property type="molecule type" value="mRNA"/>
</dbReference>
<dbReference type="RefSeq" id="NP_001032692.1">
    <property type="nucleotide sequence ID" value="NM_001037603.1"/>
</dbReference>
<dbReference type="RefSeq" id="XP_005228068.1">
    <property type="nucleotide sequence ID" value="XM_005228011.5"/>
</dbReference>
<dbReference type="SMR" id="Q32LE7"/>
<dbReference type="FunCoup" id="Q32LE7">
    <property type="interactions" value="1082"/>
</dbReference>
<dbReference type="STRING" id="9913.ENSBTAP00000017091"/>
<dbReference type="PaxDb" id="9913-ENSBTAP00000017091"/>
<dbReference type="Ensembl" id="ENSBTAT00000017091.4">
    <property type="protein sequence ID" value="ENSBTAP00000017091.2"/>
    <property type="gene ID" value="ENSBTAG00000012860.4"/>
</dbReference>
<dbReference type="GeneID" id="515371"/>
<dbReference type="KEGG" id="bta:515371"/>
<dbReference type="CTD" id="51248"/>
<dbReference type="VEuPathDB" id="HostDB:ENSBTAG00000012860"/>
<dbReference type="VGNC" id="VGNC:32724">
    <property type="gene designation" value="PDZD11"/>
</dbReference>
<dbReference type="eggNOG" id="KOG3528">
    <property type="taxonomic scope" value="Eukaryota"/>
</dbReference>
<dbReference type="GeneTree" id="ENSGT00940000153222"/>
<dbReference type="HOGENOM" id="CLU_133335_0_0_1"/>
<dbReference type="InParanoid" id="Q32LE7"/>
<dbReference type="OMA" id="RGGREHN"/>
<dbReference type="OrthoDB" id="6021951at2759"/>
<dbReference type="TreeFam" id="TF318964"/>
<dbReference type="Reactome" id="R-BTA-196780">
    <property type="pathway name" value="Biotin transport and metabolism"/>
</dbReference>
<dbReference type="Reactome" id="R-BTA-199220">
    <property type="pathway name" value="Vitamin B5 (pantothenate) metabolism"/>
</dbReference>
<dbReference type="Reactome" id="R-BTA-425397">
    <property type="pathway name" value="Transport of vitamins, nucleosides, and related molecules"/>
</dbReference>
<dbReference type="Proteomes" id="UP000009136">
    <property type="component" value="Chromosome X"/>
</dbReference>
<dbReference type="Bgee" id="ENSBTAG00000012860">
    <property type="expression patterns" value="Expressed in oocyte and 103 other cell types or tissues"/>
</dbReference>
<dbReference type="GO" id="GO:0005912">
    <property type="term" value="C:adherens junction"/>
    <property type="evidence" value="ECO:0007669"/>
    <property type="project" value="UniProtKB-SubCell"/>
</dbReference>
<dbReference type="GO" id="GO:0016323">
    <property type="term" value="C:basolateral plasma membrane"/>
    <property type="evidence" value="ECO:0000250"/>
    <property type="project" value="UniProtKB"/>
</dbReference>
<dbReference type="GO" id="GO:0005911">
    <property type="term" value="C:cell-cell junction"/>
    <property type="evidence" value="ECO:0000318"/>
    <property type="project" value="GO_Central"/>
</dbReference>
<dbReference type="GO" id="GO:0005829">
    <property type="term" value="C:cytosol"/>
    <property type="evidence" value="ECO:0000250"/>
    <property type="project" value="UniProtKB"/>
</dbReference>
<dbReference type="GO" id="GO:0046930">
    <property type="term" value="C:pore complex"/>
    <property type="evidence" value="ECO:0007669"/>
    <property type="project" value="Ensembl"/>
</dbReference>
<dbReference type="GO" id="GO:0098793">
    <property type="term" value="C:presynapse"/>
    <property type="evidence" value="ECO:0007669"/>
    <property type="project" value="GOC"/>
</dbReference>
<dbReference type="GO" id="GO:0030674">
    <property type="term" value="F:protein-macromolecule adaptor activity"/>
    <property type="evidence" value="ECO:0000318"/>
    <property type="project" value="GO_Central"/>
</dbReference>
<dbReference type="GO" id="GO:0007269">
    <property type="term" value="P:neurotransmitter secretion"/>
    <property type="evidence" value="ECO:0000318"/>
    <property type="project" value="GO_Central"/>
</dbReference>
<dbReference type="GO" id="GO:0046931">
    <property type="term" value="P:pore complex assembly"/>
    <property type="evidence" value="ECO:0000318"/>
    <property type="project" value="GO_Central"/>
</dbReference>
<dbReference type="GO" id="GO:0008582">
    <property type="term" value="P:regulation of synaptic assembly at neuromuscular junction"/>
    <property type="evidence" value="ECO:0000318"/>
    <property type="project" value="GO_Central"/>
</dbReference>
<dbReference type="GO" id="GO:0048489">
    <property type="term" value="P:synaptic vesicle transport"/>
    <property type="evidence" value="ECO:0000318"/>
    <property type="project" value="GO_Central"/>
</dbReference>
<dbReference type="CDD" id="cd06752">
    <property type="entry name" value="PDZ_PDZD11-like"/>
    <property type="match status" value="1"/>
</dbReference>
<dbReference type="FunFam" id="2.30.42.10:FF:000096">
    <property type="entry name" value="PDZ domain-containing protein 11"/>
    <property type="match status" value="1"/>
</dbReference>
<dbReference type="Gene3D" id="2.30.42.10">
    <property type="match status" value="1"/>
</dbReference>
<dbReference type="InterPro" id="IPR051109">
    <property type="entry name" value="MAM_complex_regulator"/>
</dbReference>
<dbReference type="InterPro" id="IPR001478">
    <property type="entry name" value="PDZ"/>
</dbReference>
<dbReference type="InterPro" id="IPR036034">
    <property type="entry name" value="PDZ_sf"/>
</dbReference>
<dbReference type="PANTHER" id="PTHR14063">
    <property type="entry name" value="PROTEIN LIN-7 HOMOLOG"/>
    <property type="match status" value="1"/>
</dbReference>
<dbReference type="Pfam" id="PF00595">
    <property type="entry name" value="PDZ"/>
    <property type="match status" value="1"/>
</dbReference>
<dbReference type="SMART" id="SM00228">
    <property type="entry name" value="PDZ"/>
    <property type="match status" value="1"/>
</dbReference>
<dbReference type="SUPFAM" id="SSF50156">
    <property type="entry name" value="PDZ domain-like"/>
    <property type="match status" value="1"/>
</dbReference>
<dbReference type="PROSITE" id="PS50106">
    <property type="entry name" value="PDZ"/>
    <property type="match status" value="1"/>
</dbReference>